<gene>
    <name evidence="1" type="primary">atpC</name>
    <name type="ordered locus">Haur_4073</name>
</gene>
<feature type="chain" id="PRO_1000146333" description="ATP synthase epsilon chain">
    <location>
        <begin position="1"/>
        <end position="136"/>
    </location>
</feature>
<proteinExistence type="inferred from homology"/>
<keyword id="KW-0066">ATP synthesis</keyword>
<keyword id="KW-1003">Cell membrane</keyword>
<keyword id="KW-0139">CF(1)</keyword>
<keyword id="KW-0375">Hydrogen ion transport</keyword>
<keyword id="KW-0406">Ion transport</keyword>
<keyword id="KW-0472">Membrane</keyword>
<keyword id="KW-0813">Transport</keyword>
<evidence type="ECO:0000255" key="1">
    <source>
        <dbReference type="HAMAP-Rule" id="MF_00530"/>
    </source>
</evidence>
<reference key="1">
    <citation type="journal article" date="2011" name="Stand. Genomic Sci.">
        <title>Complete genome sequence of the filamentous gliding predatory bacterium Herpetosiphon aurantiacus type strain (114-95(T)).</title>
        <authorList>
            <person name="Kiss H."/>
            <person name="Nett M."/>
            <person name="Domin N."/>
            <person name="Martin K."/>
            <person name="Maresca J.A."/>
            <person name="Copeland A."/>
            <person name="Lapidus A."/>
            <person name="Lucas S."/>
            <person name="Berry K.W."/>
            <person name="Glavina Del Rio T."/>
            <person name="Dalin E."/>
            <person name="Tice H."/>
            <person name="Pitluck S."/>
            <person name="Richardson P."/>
            <person name="Bruce D."/>
            <person name="Goodwin L."/>
            <person name="Han C."/>
            <person name="Detter J.C."/>
            <person name="Schmutz J."/>
            <person name="Brettin T."/>
            <person name="Land M."/>
            <person name="Hauser L."/>
            <person name="Kyrpides N.C."/>
            <person name="Ivanova N."/>
            <person name="Goeker M."/>
            <person name="Woyke T."/>
            <person name="Klenk H.P."/>
            <person name="Bryant D.A."/>
        </authorList>
    </citation>
    <scope>NUCLEOTIDE SEQUENCE [LARGE SCALE GENOMIC DNA]</scope>
    <source>
        <strain>ATCC 23779 / DSM 785 / 114-95</strain>
    </source>
</reference>
<accession>A9AVV5</accession>
<name>ATPE_HERA2</name>
<protein>
    <recommendedName>
        <fullName evidence="1">ATP synthase epsilon chain</fullName>
    </recommendedName>
    <alternativeName>
        <fullName evidence="1">ATP synthase F1 sector epsilon subunit</fullName>
    </alternativeName>
    <alternativeName>
        <fullName evidence="1">F-ATPase epsilon subunit</fullName>
    </alternativeName>
</protein>
<dbReference type="EMBL" id="CP000875">
    <property type="protein sequence ID" value="ABX06705.1"/>
    <property type="molecule type" value="Genomic_DNA"/>
</dbReference>
<dbReference type="SMR" id="A9AVV5"/>
<dbReference type="FunCoup" id="A9AVV5">
    <property type="interactions" value="466"/>
</dbReference>
<dbReference type="STRING" id="316274.Haur_4073"/>
<dbReference type="KEGG" id="hau:Haur_4073"/>
<dbReference type="eggNOG" id="COG0355">
    <property type="taxonomic scope" value="Bacteria"/>
</dbReference>
<dbReference type="HOGENOM" id="CLU_084338_1_3_0"/>
<dbReference type="InParanoid" id="A9AVV5"/>
<dbReference type="Proteomes" id="UP000000787">
    <property type="component" value="Chromosome"/>
</dbReference>
<dbReference type="GO" id="GO:0005886">
    <property type="term" value="C:plasma membrane"/>
    <property type="evidence" value="ECO:0007669"/>
    <property type="project" value="UniProtKB-SubCell"/>
</dbReference>
<dbReference type="GO" id="GO:0045259">
    <property type="term" value="C:proton-transporting ATP synthase complex"/>
    <property type="evidence" value="ECO:0007669"/>
    <property type="project" value="UniProtKB-KW"/>
</dbReference>
<dbReference type="GO" id="GO:0005524">
    <property type="term" value="F:ATP binding"/>
    <property type="evidence" value="ECO:0007669"/>
    <property type="project" value="UniProtKB-UniRule"/>
</dbReference>
<dbReference type="GO" id="GO:0046933">
    <property type="term" value="F:proton-transporting ATP synthase activity, rotational mechanism"/>
    <property type="evidence" value="ECO:0007669"/>
    <property type="project" value="UniProtKB-UniRule"/>
</dbReference>
<dbReference type="CDD" id="cd12152">
    <property type="entry name" value="F1-ATPase_delta"/>
    <property type="match status" value="1"/>
</dbReference>
<dbReference type="Gene3D" id="1.20.5.440">
    <property type="entry name" value="ATP synthase delta/epsilon subunit, C-terminal domain"/>
    <property type="match status" value="1"/>
</dbReference>
<dbReference type="Gene3D" id="2.60.15.10">
    <property type="entry name" value="F0F1 ATP synthase delta/epsilon subunit, N-terminal"/>
    <property type="match status" value="1"/>
</dbReference>
<dbReference type="HAMAP" id="MF_00530">
    <property type="entry name" value="ATP_synth_epsil_bac"/>
    <property type="match status" value="1"/>
</dbReference>
<dbReference type="InterPro" id="IPR036794">
    <property type="entry name" value="ATP_F1_dsu/esu_C_sf"/>
</dbReference>
<dbReference type="InterPro" id="IPR001469">
    <property type="entry name" value="ATP_synth_F1_dsu/esu"/>
</dbReference>
<dbReference type="InterPro" id="IPR020546">
    <property type="entry name" value="ATP_synth_F1_dsu/esu_N"/>
</dbReference>
<dbReference type="InterPro" id="IPR020547">
    <property type="entry name" value="ATP_synth_F1_esu_C"/>
</dbReference>
<dbReference type="InterPro" id="IPR036771">
    <property type="entry name" value="ATPsynth_dsu/esu_N"/>
</dbReference>
<dbReference type="NCBIfam" id="TIGR01216">
    <property type="entry name" value="ATP_synt_epsi"/>
    <property type="match status" value="1"/>
</dbReference>
<dbReference type="NCBIfam" id="NF009980">
    <property type="entry name" value="PRK13446.1"/>
    <property type="match status" value="1"/>
</dbReference>
<dbReference type="NCBIfam" id="NF011322">
    <property type="entry name" value="PRK14735.1"/>
    <property type="match status" value="1"/>
</dbReference>
<dbReference type="PANTHER" id="PTHR13822">
    <property type="entry name" value="ATP SYNTHASE DELTA/EPSILON CHAIN"/>
    <property type="match status" value="1"/>
</dbReference>
<dbReference type="PANTHER" id="PTHR13822:SF10">
    <property type="entry name" value="ATP SYNTHASE EPSILON CHAIN, CHLOROPLASTIC"/>
    <property type="match status" value="1"/>
</dbReference>
<dbReference type="Pfam" id="PF00401">
    <property type="entry name" value="ATP-synt_DE"/>
    <property type="match status" value="1"/>
</dbReference>
<dbReference type="Pfam" id="PF02823">
    <property type="entry name" value="ATP-synt_DE_N"/>
    <property type="match status" value="1"/>
</dbReference>
<dbReference type="SUPFAM" id="SSF46604">
    <property type="entry name" value="Epsilon subunit of F1F0-ATP synthase C-terminal domain"/>
    <property type="match status" value="1"/>
</dbReference>
<dbReference type="SUPFAM" id="SSF51344">
    <property type="entry name" value="Epsilon subunit of F1F0-ATP synthase N-terminal domain"/>
    <property type="match status" value="1"/>
</dbReference>
<comment type="function">
    <text evidence="1">Produces ATP from ADP in the presence of a proton gradient across the membrane.</text>
</comment>
<comment type="subunit">
    <text evidence="1">F-type ATPases have 2 components, CF(1) - the catalytic core - and CF(0) - the membrane proton channel. CF(1) has five subunits: alpha(3), beta(3), gamma(1), delta(1), epsilon(1). CF(0) has three main subunits: a, b and c.</text>
</comment>
<comment type="subcellular location">
    <subcellularLocation>
        <location evidence="1">Cell membrane</location>
        <topology evidence="1">Peripheral membrane protein</topology>
    </subcellularLocation>
</comment>
<comment type="similarity">
    <text evidence="1">Belongs to the ATPase epsilon chain family.</text>
</comment>
<sequence>MPIQLEIVTAERVVLSEEVDMVSAPSVEGRVGILPRHEPLLTVLQPGELHYVKNGVSMPYAISGGFMEVLPNRVTILADTAERADEIDETRAEQARLQAEQAMRDRQSTEDLARAEIALRRATVRLQVAKLRRNRQ</sequence>
<organism>
    <name type="scientific">Herpetosiphon aurantiacus (strain ATCC 23779 / DSM 785 / 114-95)</name>
    <dbReference type="NCBI Taxonomy" id="316274"/>
    <lineage>
        <taxon>Bacteria</taxon>
        <taxon>Bacillati</taxon>
        <taxon>Chloroflexota</taxon>
        <taxon>Chloroflexia</taxon>
        <taxon>Herpetosiphonales</taxon>
        <taxon>Herpetosiphonaceae</taxon>
        <taxon>Herpetosiphon</taxon>
    </lineage>
</organism>